<sequence>MDAKTFDKSKLPSRHVTVGPERAPHRSYYYAMGLTEEEINQPFVGVATCWNEAAPCNIALMRQAQSVKKGVKAAAGTPREFCTITVTDGIAMGHQGMKSSLASRDVIADSVELTMRGHCYDALVGLAGCDKSLPGMMMSMVRLNVPSVFMYGGSILPGHFKGKDVTVVDVFEAVGQHSAGNMEDEELHALECVACPSAGACGGQFTANTMACVSEAMGLALPGSAGAPAPYESRDEYAEASGRAVMHLLANNIRPRDIVTRKALENAAVIVAATGGSTNGGLHLPAIAHEAGIDFDLMEVAEIFKKTPYITDLKPGGNYVAKDLHEAGGVSMVLKVLLDGGYLHGDCLTVTGQSLADNLKDVKFNPDQKVVYPLSNPLSPTGGVVGLQGSLAPDGAIVKVAGMEKDHLRFSGPARCFDSEEECFEAVDKRQYKEGEVLVIRYEGPKGGPGMREMLSTTAALYGQGMGDKVALITDGRFSGGTRGFCIGHVGPEAAVGGPIALIEDGDIITIDAENGTIDLEVDEAVLEKRRANWKPRETMYASGALWKYAQLVGTARKGAVTHPGGKAEKHVYADI</sequence>
<gene>
    <name evidence="1" type="primary">ilvD</name>
    <name type="ordered locus">Plav_3010</name>
</gene>
<comment type="function">
    <text evidence="1">Functions in the biosynthesis of branched-chain amino acids. Catalyzes the dehydration of (2R,3R)-2,3-dihydroxy-3-methylpentanoate (2,3-dihydroxy-3-methylvalerate) into 2-oxo-3-methylpentanoate (2-oxo-3-methylvalerate) and of (2R)-2,3-dihydroxy-3-methylbutanoate (2,3-dihydroxyisovalerate) into 2-oxo-3-methylbutanoate (2-oxoisovalerate), the penultimate precursor to L-isoleucine and L-valine, respectively.</text>
</comment>
<comment type="catalytic activity">
    <reaction evidence="1">
        <text>(2R)-2,3-dihydroxy-3-methylbutanoate = 3-methyl-2-oxobutanoate + H2O</text>
        <dbReference type="Rhea" id="RHEA:24809"/>
        <dbReference type="ChEBI" id="CHEBI:11851"/>
        <dbReference type="ChEBI" id="CHEBI:15377"/>
        <dbReference type="ChEBI" id="CHEBI:49072"/>
        <dbReference type="EC" id="4.2.1.9"/>
    </reaction>
    <physiologicalReaction direction="left-to-right" evidence="1">
        <dbReference type="Rhea" id="RHEA:24810"/>
    </physiologicalReaction>
</comment>
<comment type="catalytic activity">
    <reaction evidence="1">
        <text>(2R,3R)-2,3-dihydroxy-3-methylpentanoate = (S)-3-methyl-2-oxopentanoate + H2O</text>
        <dbReference type="Rhea" id="RHEA:27694"/>
        <dbReference type="ChEBI" id="CHEBI:15377"/>
        <dbReference type="ChEBI" id="CHEBI:35146"/>
        <dbReference type="ChEBI" id="CHEBI:49258"/>
        <dbReference type="EC" id="4.2.1.9"/>
    </reaction>
    <physiologicalReaction direction="left-to-right" evidence="1">
        <dbReference type="Rhea" id="RHEA:27695"/>
    </physiologicalReaction>
</comment>
<comment type="cofactor">
    <cofactor evidence="1">
        <name>[2Fe-2S] cluster</name>
        <dbReference type="ChEBI" id="CHEBI:190135"/>
    </cofactor>
    <text evidence="1">Binds 1 [2Fe-2S] cluster per subunit. This cluster acts as a Lewis acid cofactor.</text>
</comment>
<comment type="cofactor">
    <cofactor evidence="1">
        <name>Mg(2+)</name>
        <dbReference type="ChEBI" id="CHEBI:18420"/>
    </cofactor>
</comment>
<comment type="pathway">
    <text evidence="1">Amino-acid biosynthesis; L-isoleucine biosynthesis; L-isoleucine from 2-oxobutanoate: step 3/4.</text>
</comment>
<comment type="pathway">
    <text evidence="1">Amino-acid biosynthesis; L-valine biosynthesis; L-valine from pyruvate: step 3/4.</text>
</comment>
<comment type="subunit">
    <text evidence="1">Homodimer.</text>
</comment>
<comment type="similarity">
    <text evidence="1">Belongs to the IlvD/Edd family.</text>
</comment>
<feature type="chain" id="PRO_1000070951" description="Dihydroxy-acid dehydratase">
    <location>
        <begin position="1"/>
        <end position="576"/>
    </location>
</feature>
<feature type="active site" description="Proton acceptor" evidence="1">
    <location>
        <position position="479"/>
    </location>
</feature>
<feature type="binding site" evidence="1">
    <location>
        <position position="56"/>
    </location>
    <ligand>
        <name>[2Fe-2S] cluster</name>
        <dbReference type="ChEBI" id="CHEBI:190135"/>
    </ligand>
</feature>
<feature type="binding site" evidence="1">
    <location>
        <position position="88"/>
    </location>
    <ligand>
        <name>Mg(2+)</name>
        <dbReference type="ChEBI" id="CHEBI:18420"/>
    </ligand>
</feature>
<feature type="binding site" evidence="1">
    <location>
        <position position="129"/>
    </location>
    <ligand>
        <name>[2Fe-2S] cluster</name>
        <dbReference type="ChEBI" id="CHEBI:190135"/>
    </ligand>
</feature>
<feature type="binding site" evidence="1">
    <location>
        <position position="130"/>
    </location>
    <ligand>
        <name>Mg(2+)</name>
        <dbReference type="ChEBI" id="CHEBI:18420"/>
    </ligand>
</feature>
<feature type="binding site" description="via carbamate group" evidence="1">
    <location>
        <position position="131"/>
    </location>
    <ligand>
        <name>Mg(2+)</name>
        <dbReference type="ChEBI" id="CHEBI:18420"/>
    </ligand>
</feature>
<feature type="binding site" evidence="1">
    <location>
        <position position="201"/>
    </location>
    <ligand>
        <name>[2Fe-2S] cluster</name>
        <dbReference type="ChEBI" id="CHEBI:190135"/>
    </ligand>
</feature>
<feature type="binding site" evidence="1">
    <location>
        <position position="453"/>
    </location>
    <ligand>
        <name>Mg(2+)</name>
        <dbReference type="ChEBI" id="CHEBI:18420"/>
    </ligand>
</feature>
<feature type="modified residue" description="N6-carboxylysine" evidence="1">
    <location>
        <position position="131"/>
    </location>
</feature>
<name>ILVD_PARL1</name>
<dbReference type="EC" id="4.2.1.9" evidence="1"/>
<dbReference type="EMBL" id="CP000774">
    <property type="protein sequence ID" value="ABS64617.1"/>
    <property type="molecule type" value="Genomic_DNA"/>
</dbReference>
<dbReference type="RefSeq" id="WP_012111938.1">
    <property type="nucleotide sequence ID" value="NC_009719.1"/>
</dbReference>
<dbReference type="SMR" id="A7HXI4"/>
<dbReference type="STRING" id="402881.Plav_3010"/>
<dbReference type="KEGG" id="pla:Plav_3010"/>
<dbReference type="eggNOG" id="COG0129">
    <property type="taxonomic scope" value="Bacteria"/>
</dbReference>
<dbReference type="HOGENOM" id="CLU_014271_4_2_5"/>
<dbReference type="OrthoDB" id="7793094at2"/>
<dbReference type="UniPathway" id="UPA00047">
    <property type="reaction ID" value="UER00057"/>
</dbReference>
<dbReference type="UniPathway" id="UPA00049">
    <property type="reaction ID" value="UER00061"/>
</dbReference>
<dbReference type="Proteomes" id="UP000006377">
    <property type="component" value="Chromosome"/>
</dbReference>
<dbReference type="GO" id="GO:0051537">
    <property type="term" value="F:2 iron, 2 sulfur cluster binding"/>
    <property type="evidence" value="ECO:0007669"/>
    <property type="project" value="UniProtKB-UniRule"/>
</dbReference>
<dbReference type="GO" id="GO:0004160">
    <property type="term" value="F:dihydroxy-acid dehydratase activity"/>
    <property type="evidence" value="ECO:0007669"/>
    <property type="project" value="UniProtKB-UniRule"/>
</dbReference>
<dbReference type="GO" id="GO:0000287">
    <property type="term" value="F:magnesium ion binding"/>
    <property type="evidence" value="ECO:0007669"/>
    <property type="project" value="UniProtKB-UniRule"/>
</dbReference>
<dbReference type="GO" id="GO:0009097">
    <property type="term" value="P:isoleucine biosynthetic process"/>
    <property type="evidence" value="ECO:0007669"/>
    <property type="project" value="UniProtKB-UniRule"/>
</dbReference>
<dbReference type="GO" id="GO:0009099">
    <property type="term" value="P:L-valine biosynthetic process"/>
    <property type="evidence" value="ECO:0007669"/>
    <property type="project" value="UniProtKB-UniRule"/>
</dbReference>
<dbReference type="FunFam" id="3.50.30.80:FF:000001">
    <property type="entry name" value="Dihydroxy-acid dehydratase"/>
    <property type="match status" value="1"/>
</dbReference>
<dbReference type="Gene3D" id="3.50.30.80">
    <property type="entry name" value="IlvD/EDD C-terminal domain-like"/>
    <property type="match status" value="1"/>
</dbReference>
<dbReference type="HAMAP" id="MF_00012">
    <property type="entry name" value="IlvD"/>
    <property type="match status" value="1"/>
</dbReference>
<dbReference type="InterPro" id="IPR050165">
    <property type="entry name" value="DHAD_IlvD/Edd"/>
</dbReference>
<dbReference type="InterPro" id="IPR042096">
    <property type="entry name" value="Dihydro-acid_dehy_C"/>
</dbReference>
<dbReference type="InterPro" id="IPR004404">
    <property type="entry name" value="DihydroxyA_deHydtase"/>
</dbReference>
<dbReference type="InterPro" id="IPR020558">
    <property type="entry name" value="DiOHA_6PGluconate_deHydtase_CS"/>
</dbReference>
<dbReference type="InterPro" id="IPR056740">
    <property type="entry name" value="ILV_EDD_C"/>
</dbReference>
<dbReference type="InterPro" id="IPR000581">
    <property type="entry name" value="ILV_EDD_N"/>
</dbReference>
<dbReference type="InterPro" id="IPR037237">
    <property type="entry name" value="IlvD/EDD_N"/>
</dbReference>
<dbReference type="NCBIfam" id="TIGR00110">
    <property type="entry name" value="ilvD"/>
    <property type="match status" value="1"/>
</dbReference>
<dbReference type="NCBIfam" id="NF002068">
    <property type="entry name" value="PRK00911.1"/>
    <property type="match status" value="1"/>
</dbReference>
<dbReference type="PANTHER" id="PTHR21000">
    <property type="entry name" value="DIHYDROXY-ACID DEHYDRATASE DAD"/>
    <property type="match status" value="1"/>
</dbReference>
<dbReference type="PANTHER" id="PTHR21000:SF5">
    <property type="entry name" value="DIHYDROXY-ACID DEHYDRATASE, MITOCHONDRIAL"/>
    <property type="match status" value="1"/>
</dbReference>
<dbReference type="Pfam" id="PF24877">
    <property type="entry name" value="ILV_EDD_C"/>
    <property type="match status" value="1"/>
</dbReference>
<dbReference type="Pfam" id="PF00920">
    <property type="entry name" value="ILVD_EDD_N"/>
    <property type="match status" value="1"/>
</dbReference>
<dbReference type="SUPFAM" id="SSF143975">
    <property type="entry name" value="IlvD/EDD N-terminal domain-like"/>
    <property type="match status" value="1"/>
</dbReference>
<dbReference type="SUPFAM" id="SSF52016">
    <property type="entry name" value="LeuD/IlvD-like"/>
    <property type="match status" value="1"/>
</dbReference>
<dbReference type="PROSITE" id="PS00887">
    <property type="entry name" value="ILVD_EDD_2"/>
    <property type="match status" value="1"/>
</dbReference>
<accession>A7HXI4</accession>
<organism>
    <name type="scientific">Parvibaculum lavamentivorans (strain DS-1 / DSM 13023 / NCIMB 13966)</name>
    <dbReference type="NCBI Taxonomy" id="402881"/>
    <lineage>
        <taxon>Bacteria</taxon>
        <taxon>Pseudomonadati</taxon>
        <taxon>Pseudomonadota</taxon>
        <taxon>Alphaproteobacteria</taxon>
        <taxon>Hyphomicrobiales</taxon>
        <taxon>Parvibaculaceae</taxon>
        <taxon>Parvibaculum</taxon>
    </lineage>
</organism>
<reference key="1">
    <citation type="journal article" date="2011" name="Stand. Genomic Sci.">
        <title>Complete genome sequence of Parvibaculum lavamentivorans type strain (DS-1(T)).</title>
        <authorList>
            <person name="Schleheck D."/>
            <person name="Weiss M."/>
            <person name="Pitluck S."/>
            <person name="Bruce D."/>
            <person name="Land M.L."/>
            <person name="Han S."/>
            <person name="Saunders E."/>
            <person name="Tapia R."/>
            <person name="Detter C."/>
            <person name="Brettin T."/>
            <person name="Han J."/>
            <person name="Woyke T."/>
            <person name="Goodwin L."/>
            <person name="Pennacchio L."/>
            <person name="Nolan M."/>
            <person name="Cook A.M."/>
            <person name="Kjelleberg S."/>
            <person name="Thomas T."/>
        </authorList>
    </citation>
    <scope>NUCLEOTIDE SEQUENCE [LARGE SCALE GENOMIC DNA]</scope>
    <source>
        <strain>DS-1 / DSM 13023 / NCIMB 13966</strain>
    </source>
</reference>
<proteinExistence type="inferred from homology"/>
<protein>
    <recommendedName>
        <fullName evidence="1">Dihydroxy-acid dehydratase</fullName>
        <shortName evidence="1">DAD</shortName>
        <ecNumber evidence="1">4.2.1.9</ecNumber>
    </recommendedName>
</protein>
<evidence type="ECO:0000255" key="1">
    <source>
        <dbReference type="HAMAP-Rule" id="MF_00012"/>
    </source>
</evidence>
<keyword id="KW-0001">2Fe-2S</keyword>
<keyword id="KW-0028">Amino-acid biosynthesis</keyword>
<keyword id="KW-0100">Branched-chain amino acid biosynthesis</keyword>
<keyword id="KW-0408">Iron</keyword>
<keyword id="KW-0411">Iron-sulfur</keyword>
<keyword id="KW-0456">Lyase</keyword>
<keyword id="KW-0460">Magnesium</keyword>
<keyword id="KW-0479">Metal-binding</keyword>
<keyword id="KW-1185">Reference proteome</keyword>